<proteinExistence type="inferred from homology"/>
<reference key="1">
    <citation type="journal article" date="2007" name="PLoS Genet.">
        <title>Patterns and implications of gene gain and loss in the evolution of Prochlorococcus.</title>
        <authorList>
            <person name="Kettler G.C."/>
            <person name="Martiny A.C."/>
            <person name="Huang K."/>
            <person name="Zucker J."/>
            <person name="Coleman M.L."/>
            <person name="Rodrigue S."/>
            <person name="Chen F."/>
            <person name="Lapidus A."/>
            <person name="Ferriera S."/>
            <person name="Johnson J."/>
            <person name="Steglich C."/>
            <person name="Church G.M."/>
            <person name="Richardson P."/>
            <person name="Chisholm S.W."/>
        </authorList>
    </citation>
    <scope>NUCLEOTIDE SEQUENCE [LARGE SCALE GENOMIC DNA]</scope>
    <source>
        <strain>MIT 9215</strain>
    </source>
</reference>
<evidence type="ECO:0000255" key="1">
    <source>
        <dbReference type="HAMAP-Rule" id="MF_00270"/>
    </source>
</evidence>
<evidence type="ECO:0000305" key="2"/>
<name>RS18_PROM2</name>
<protein>
    <recommendedName>
        <fullName evidence="1">Small ribosomal subunit protein bS18</fullName>
    </recommendedName>
    <alternativeName>
        <fullName evidence="2">30S ribosomal protein S18</fullName>
    </alternativeName>
</protein>
<feature type="chain" id="PRO_1000059141" description="Small ribosomal subunit protein bS18">
    <location>
        <begin position="1"/>
        <end position="73"/>
    </location>
</feature>
<gene>
    <name evidence="1" type="primary">rpsR</name>
    <name evidence="1" type="synonym">rps18</name>
    <name type="ordered locus">P9215_10241</name>
</gene>
<keyword id="KW-0687">Ribonucleoprotein</keyword>
<keyword id="KW-0689">Ribosomal protein</keyword>
<keyword id="KW-0694">RNA-binding</keyword>
<keyword id="KW-0699">rRNA-binding</keyword>
<accession>A8G4V8</accession>
<sequence>MPNSIFKKQLSPIKPGDPIDYKDVELLKKFITERGKILPRRMTGLTSKQQRDLTLAVKRARIVALLPFVNPEG</sequence>
<organism>
    <name type="scientific">Prochlorococcus marinus (strain MIT 9215)</name>
    <dbReference type="NCBI Taxonomy" id="93060"/>
    <lineage>
        <taxon>Bacteria</taxon>
        <taxon>Bacillati</taxon>
        <taxon>Cyanobacteriota</taxon>
        <taxon>Cyanophyceae</taxon>
        <taxon>Synechococcales</taxon>
        <taxon>Prochlorococcaceae</taxon>
        <taxon>Prochlorococcus</taxon>
    </lineage>
</organism>
<comment type="function">
    <text evidence="1">Binds as a heterodimer with protein bS6 to the central domain of the 16S rRNA, where it helps stabilize the platform of the 30S subunit.</text>
</comment>
<comment type="subunit">
    <text evidence="1">Part of the 30S ribosomal subunit. Forms a tight heterodimer with protein bS6.</text>
</comment>
<comment type="similarity">
    <text evidence="1">Belongs to the bacterial ribosomal protein bS18 family.</text>
</comment>
<dbReference type="EMBL" id="CP000825">
    <property type="protein sequence ID" value="ABV50639.1"/>
    <property type="molecule type" value="Genomic_DNA"/>
</dbReference>
<dbReference type="RefSeq" id="WP_002806014.1">
    <property type="nucleotide sequence ID" value="NC_009840.1"/>
</dbReference>
<dbReference type="SMR" id="A8G4V8"/>
<dbReference type="STRING" id="93060.P9215_10241"/>
<dbReference type="GeneID" id="60201040"/>
<dbReference type="KEGG" id="pmh:P9215_10241"/>
<dbReference type="eggNOG" id="COG0238">
    <property type="taxonomic scope" value="Bacteria"/>
</dbReference>
<dbReference type="HOGENOM" id="CLU_148710_2_3_3"/>
<dbReference type="OrthoDB" id="9812008at2"/>
<dbReference type="Proteomes" id="UP000002014">
    <property type="component" value="Chromosome"/>
</dbReference>
<dbReference type="GO" id="GO:0022627">
    <property type="term" value="C:cytosolic small ribosomal subunit"/>
    <property type="evidence" value="ECO:0007669"/>
    <property type="project" value="TreeGrafter"/>
</dbReference>
<dbReference type="GO" id="GO:0070181">
    <property type="term" value="F:small ribosomal subunit rRNA binding"/>
    <property type="evidence" value="ECO:0007669"/>
    <property type="project" value="TreeGrafter"/>
</dbReference>
<dbReference type="GO" id="GO:0003735">
    <property type="term" value="F:structural constituent of ribosome"/>
    <property type="evidence" value="ECO:0007669"/>
    <property type="project" value="InterPro"/>
</dbReference>
<dbReference type="GO" id="GO:0006412">
    <property type="term" value="P:translation"/>
    <property type="evidence" value="ECO:0007669"/>
    <property type="project" value="UniProtKB-UniRule"/>
</dbReference>
<dbReference type="FunFam" id="4.10.640.10:FF:000002">
    <property type="entry name" value="30S ribosomal protein S18, chloroplastic"/>
    <property type="match status" value="1"/>
</dbReference>
<dbReference type="Gene3D" id="4.10.640.10">
    <property type="entry name" value="Ribosomal protein S18"/>
    <property type="match status" value="1"/>
</dbReference>
<dbReference type="HAMAP" id="MF_00270">
    <property type="entry name" value="Ribosomal_bS18"/>
    <property type="match status" value="1"/>
</dbReference>
<dbReference type="InterPro" id="IPR001648">
    <property type="entry name" value="Ribosomal_bS18"/>
</dbReference>
<dbReference type="InterPro" id="IPR018275">
    <property type="entry name" value="Ribosomal_bS18_CS"/>
</dbReference>
<dbReference type="InterPro" id="IPR036870">
    <property type="entry name" value="Ribosomal_bS18_sf"/>
</dbReference>
<dbReference type="NCBIfam" id="TIGR00165">
    <property type="entry name" value="S18"/>
    <property type="match status" value="1"/>
</dbReference>
<dbReference type="PANTHER" id="PTHR13479">
    <property type="entry name" value="30S RIBOSOMAL PROTEIN S18"/>
    <property type="match status" value="1"/>
</dbReference>
<dbReference type="PANTHER" id="PTHR13479:SF40">
    <property type="entry name" value="SMALL RIBOSOMAL SUBUNIT PROTEIN BS18M"/>
    <property type="match status" value="1"/>
</dbReference>
<dbReference type="Pfam" id="PF01084">
    <property type="entry name" value="Ribosomal_S18"/>
    <property type="match status" value="1"/>
</dbReference>
<dbReference type="PRINTS" id="PR00974">
    <property type="entry name" value="RIBOSOMALS18"/>
</dbReference>
<dbReference type="SUPFAM" id="SSF46911">
    <property type="entry name" value="Ribosomal protein S18"/>
    <property type="match status" value="1"/>
</dbReference>
<dbReference type="PROSITE" id="PS00057">
    <property type="entry name" value="RIBOSOMAL_S18"/>
    <property type="match status" value="1"/>
</dbReference>